<sequence>MDVRCINWFESHGENRFLYLKSRCRNGETVFIRFPHYFYYVVTDEIYQSLAPPPFNARPMGKMRTIDIDETISYNLDIKDRKCSVADMWLIEEPKKRNIQNATMDEFLNISWFYISNGISPDGCYSLDDQYLTKINNGCYHCGDPRNCFAKEIPRFDIPRSYLFLDIECHFDKKFPSVFINPISHTSYCYIDLSGKRLLFTLINEEMLTEQEIQEAVDRGCLRIQSLMEMDYERELVLCSEIVLLQIAKQLLELTFDYIVTFNGHNFDLRYITNRLELLTGEKIIFRSPDKKEAVHLCIYERNQSSHKGVGGMANTTFHVNNNNGTIFFDLYSFIQKSEKLDSYKLDSISKNAFSCMGKVLNRGVREMTFIGDDTTDAKGKAAVFAKVLTTGNYVTVDDIICKVIHKDIWENGFKVVLSCPTLTNDTYKLSFGKDDVDLAQMYKDYNLNIALDMARYCIHDACLCQYLWEYYGVETKTDAGASTYVLPQSMVFGYKASTVIKGPLLKLLLETKTILVRSETKQKFPYEGGKVFAPKQKMFSNNVLIFDYNSLYPNVCIFGNLSPETLVGVVVSSNRLEEEINNQLLLQKYPPPRYITVHCEPRLPNLISEIAIFDRSIEGTIPRLLRTFLAERARYKKMLKQATSSTEKAIYDSMQYTYKIIANSVYGLMGFRNSALYSYASAKSCTSIGRRMILYLESVLNGAELSNGMLRFANPLSNPFYMDDRDINPIVKTSLPIDYRFRFRSVYGDTDSVFTEIDSQDVDKSIEIAKELERLINSRVLFNNFKIEFEAVYKNLIMQSKKKYTTMKYSASSNSKSVPERINKGTSETRRDVSKFHKNMIKIYKTRLSEMLSEGRMNSNQVCIDILRSLETDLRSEFDSRSSPLELFMLSRMHHLNYKSADNPNMYLVTEYNKNNPETIELGERYYFAYICPANVPWTKKLVNIKTYETIIDRSFKLGSDQRIFYEVYFKRLTSEIVNLLDNKVLCISFFERMFGSRPTFYEA</sequence>
<reference key="1">
    <citation type="journal article" date="1993" name="Virus Res.">
        <title>Analysis of the nucleotide sequence of a 43 kbp segment of the genome of variola virus India-1967 strain.</title>
        <authorList>
            <person name="Shchelkunov S.N."/>
            <person name="Blinov V.M."/>
            <person name="Resenchuk S.M."/>
            <person name="Totmenin A.V."/>
            <person name="Sandakhchiev L.S."/>
        </authorList>
    </citation>
    <scope>NUCLEOTIDE SEQUENCE [GENOMIC DNA]</scope>
</reference>
<reference key="2">
    <citation type="journal article" date="1993" name="FEBS Lett.">
        <title>Genes of variola and vaccinia viruses necessary to overcome the host protective mechanisms.</title>
        <authorList>
            <person name="Shchelkunov S.N."/>
            <person name="Blinov V.M."/>
            <person name="Sandakhchiev L.S."/>
        </authorList>
    </citation>
    <scope>NUCLEOTIDE SEQUENCE [LARGE SCALE GENOMIC DNA]</scope>
</reference>
<dbReference type="EC" id="2.7.7.7"/>
<dbReference type="EC" id="3.1.11.-"/>
<dbReference type="EMBL" id="X69198">
    <property type="protein sequence ID" value="CAA48991.1"/>
    <property type="molecule type" value="Genomic_DNA"/>
</dbReference>
<dbReference type="PIR" id="C36842">
    <property type="entry name" value="C36842"/>
</dbReference>
<dbReference type="RefSeq" id="NP_042094.1">
    <property type="nucleotide sequence ID" value="NC_001611.1"/>
</dbReference>
<dbReference type="PDB" id="6ZXP">
    <property type="method" value="NMR"/>
    <property type="chains" value="A=575-589"/>
</dbReference>
<dbReference type="PDBsum" id="6ZXP"/>
<dbReference type="SMR" id="P0DOO5"/>
<dbReference type="GeneID" id="1486415"/>
<dbReference type="KEGG" id="vg:1486415"/>
<dbReference type="Proteomes" id="UP000002060">
    <property type="component" value="Segment"/>
</dbReference>
<dbReference type="GO" id="GO:0003677">
    <property type="term" value="F:DNA binding"/>
    <property type="evidence" value="ECO:0007669"/>
    <property type="project" value="UniProtKB-KW"/>
</dbReference>
<dbReference type="GO" id="GO:0003887">
    <property type="term" value="F:DNA-directed DNA polymerase activity"/>
    <property type="evidence" value="ECO:0007669"/>
    <property type="project" value="UniProtKB-KW"/>
</dbReference>
<dbReference type="GO" id="GO:0016787">
    <property type="term" value="F:hydrolase activity"/>
    <property type="evidence" value="ECO:0007669"/>
    <property type="project" value="UniProtKB-KW"/>
</dbReference>
<dbReference type="GO" id="GO:0000166">
    <property type="term" value="F:nucleotide binding"/>
    <property type="evidence" value="ECO:0007669"/>
    <property type="project" value="InterPro"/>
</dbReference>
<dbReference type="GO" id="GO:0006310">
    <property type="term" value="P:DNA recombination"/>
    <property type="evidence" value="ECO:0007669"/>
    <property type="project" value="UniProtKB-KW"/>
</dbReference>
<dbReference type="GO" id="GO:0006261">
    <property type="term" value="P:DNA-templated DNA replication"/>
    <property type="evidence" value="ECO:0007669"/>
    <property type="project" value="TreeGrafter"/>
</dbReference>
<dbReference type="GO" id="GO:0039693">
    <property type="term" value="P:viral DNA genome replication"/>
    <property type="evidence" value="ECO:0007669"/>
    <property type="project" value="UniProtKB-KW"/>
</dbReference>
<dbReference type="FunFam" id="1.10.287.690:FF:000010">
    <property type="entry name" value="DNA polymerase"/>
    <property type="match status" value="1"/>
</dbReference>
<dbReference type="Gene3D" id="1.10.287.690">
    <property type="entry name" value="Helix hairpin bin"/>
    <property type="match status" value="1"/>
</dbReference>
<dbReference type="Gene3D" id="3.90.1600.10">
    <property type="entry name" value="Palm domain of DNA polymerase"/>
    <property type="match status" value="2"/>
</dbReference>
<dbReference type="Gene3D" id="3.30.420.10">
    <property type="entry name" value="Ribonuclease H-like superfamily/Ribonuclease H"/>
    <property type="match status" value="1"/>
</dbReference>
<dbReference type="InterPro" id="IPR006172">
    <property type="entry name" value="DNA-dir_DNA_pol_B"/>
</dbReference>
<dbReference type="InterPro" id="IPR017964">
    <property type="entry name" value="DNA-dir_DNA_pol_B_CS"/>
</dbReference>
<dbReference type="InterPro" id="IPR006133">
    <property type="entry name" value="DNA-dir_DNA_pol_B_exonuc"/>
</dbReference>
<dbReference type="InterPro" id="IPR006134">
    <property type="entry name" value="DNA-dir_DNA_pol_B_multi_dom"/>
</dbReference>
<dbReference type="InterPro" id="IPR013617">
    <property type="entry name" value="DNA-dir_DNA_pol_B_vir_insert"/>
</dbReference>
<dbReference type="InterPro" id="IPR043502">
    <property type="entry name" value="DNA/RNA_pol_sf"/>
</dbReference>
<dbReference type="InterPro" id="IPR023211">
    <property type="entry name" value="DNA_pol_palm_dom_sf"/>
</dbReference>
<dbReference type="InterPro" id="IPR050240">
    <property type="entry name" value="DNA_pol_type-B"/>
</dbReference>
<dbReference type="InterPro" id="IPR013660">
    <property type="entry name" value="DNApol_B_exo_N"/>
</dbReference>
<dbReference type="InterPro" id="IPR012337">
    <property type="entry name" value="RNaseH-like_sf"/>
</dbReference>
<dbReference type="InterPro" id="IPR036397">
    <property type="entry name" value="RNaseH_sf"/>
</dbReference>
<dbReference type="PANTHER" id="PTHR10322">
    <property type="entry name" value="DNA POLYMERASE CATALYTIC SUBUNIT"/>
    <property type="match status" value="1"/>
</dbReference>
<dbReference type="PANTHER" id="PTHR10322:SF23">
    <property type="entry name" value="DNA POLYMERASE DELTA CATALYTIC SUBUNIT"/>
    <property type="match status" value="1"/>
</dbReference>
<dbReference type="Pfam" id="PF00136">
    <property type="entry name" value="DNA_pol_B"/>
    <property type="match status" value="1"/>
</dbReference>
<dbReference type="Pfam" id="PF08408">
    <property type="entry name" value="DNA_pol_B_3"/>
    <property type="match status" value="1"/>
</dbReference>
<dbReference type="Pfam" id="PF03104">
    <property type="entry name" value="DNA_pol_B_exo1"/>
    <property type="match status" value="1"/>
</dbReference>
<dbReference type="Pfam" id="PF08452">
    <property type="entry name" value="DNAP_B_exo_N"/>
    <property type="match status" value="1"/>
</dbReference>
<dbReference type="PRINTS" id="PR00106">
    <property type="entry name" value="DNAPOLB"/>
</dbReference>
<dbReference type="SMART" id="SM00486">
    <property type="entry name" value="POLBc"/>
    <property type="match status" value="1"/>
</dbReference>
<dbReference type="SUPFAM" id="SSF56672">
    <property type="entry name" value="DNA/RNA polymerases"/>
    <property type="match status" value="1"/>
</dbReference>
<dbReference type="SUPFAM" id="SSF53098">
    <property type="entry name" value="Ribonuclease H-like"/>
    <property type="match status" value="1"/>
</dbReference>
<dbReference type="PROSITE" id="PS00116">
    <property type="entry name" value="DNA_POLYMERASE_B"/>
    <property type="match status" value="1"/>
</dbReference>
<gene>
    <name type="primary">OPG071</name>
    <name type="synonym">POL</name>
    <name type="ORF">E9L</name>
</gene>
<organism>
    <name type="scientific">Variola virus (isolate Human/India/Ind3/1967)</name>
    <name type="common">VARV</name>
    <name type="synonym">Smallpox virus</name>
    <dbReference type="NCBI Taxonomy" id="587200"/>
    <lineage>
        <taxon>Viruses</taxon>
        <taxon>Varidnaviria</taxon>
        <taxon>Bamfordvirae</taxon>
        <taxon>Nucleocytoviricota</taxon>
        <taxon>Pokkesviricetes</taxon>
        <taxon>Chitovirales</taxon>
        <taxon>Poxviridae</taxon>
        <taxon>Chordopoxvirinae</taxon>
        <taxon>Orthopoxvirus</taxon>
        <taxon>Variola virus</taxon>
    </lineage>
</organism>
<comment type="function">
    <text evidence="1">Catalyzes DNA synthesis. Acquires processivity by associating with a heterodimeric processivity factor comprised of the viral OPG148 and OPG116 proteins, thereby forming the DNA polymerase holoenzyme. Displays 3'- to 5' exonuclease activity. Might participate in viral DNA recombination. Does not perform OPG116/D4synthesis across an abasic site.</text>
</comment>
<comment type="catalytic activity">
    <reaction evidence="1">
        <text>DNA(n) + a 2'-deoxyribonucleoside 5'-triphosphate = DNA(n+1) + diphosphate</text>
        <dbReference type="Rhea" id="RHEA:22508"/>
        <dbReference type="Rhea" id="RHEA-COMP:17339"/>
        <dbReference type="Rhea" id="RHEA-COMP:17340"/>
        <dbReference type="ChEBI" id="CHEBI:33019"/>
        <dbReference type="ChEBI" id="CHEBI:61560"/>
        <dbReference type="ChEBI" id="CHEBI:173112"/>
        <dbReference type="EC" id="2.7.7.7"/>
    </reaction>
</comment>
<comment type="subunit">
    <text evidence="1">Interacts with OPG148. Component of the Uracil-DNA glycosylase(UDG)-OPG148-polymerase complex; OPG148 and OPG116/UDG form a heterodimeric processivity factor that associates with OPG071 to form the processive polymerase holoenzyme.</text>
</comment>
<comment type="induction">
    <text evidence="1">Expressed in the early phase of the viral replicative cycle.</text>
</comment>
<comment type="similarity">
    <text evidence="2">Belongs to the DNA polymerase type-B family.</text>
</comment>
<protein>
    <recommendedName>
        <fullName>DNA polymerase</fullName>
        <ecNumber>2.7.7.7</ecNumber>
    </recommendedName>
    <domain>
        <recommendedName>
            <fullName>3'-5' exodeoxyribonuclease</fullName>
            <shortName>3'-5' exonuclease</shortName>
            <ecNumber>3.1.11.-</ecNumber>
        </recommendedName>
    </domain>
</protein>
<proteinExistence type="evidence at protein level"/>
<accession>P0DOO5</accession>
<accession>P33793</accession>
<accession>Q85375</accession>
<feature type="chain" id="PRO_0000046534" description="DNA polymerase">
    <location>
        <begin position="1"/>
        <end position="1005"/>
    </location>
</feature>
<feature type="helix" evidence="3">
    <location>
        <begin position="577"/>
        <end position="586"/>
    </location>
</feature>
<evidence type="ECO:0000250" key="1">
    <source>
        <dbReference type="UniProtKB" id="P06856"/>
    </source>
</evidence>
<evidence type="ECO:0000305" key="2"/>
<evidence type="ECO:0007829" key="3">
    <source>
        <dbReference type="PDB" id="6ZXP"/>
    </source>
</evidence>
<name>DPOL_VAR67</name>
<organismHost>
    <name type="scientific">Homo sapiens</name>
    <name type="common">Human</name>
    <dbReference type="NCBI Taxonomy" id="9606"/>
</organismHost>
<keyword id="KW-0002">3D-structure</keyword>
<keyword id="KW-0233">DNA recombination</keyword>
<keyword id="KW-0235">DNA replication</keyword>
<keyword id="KW-0238">DNA-binding</keyword>
<keyword id="KW-0239">DNA-directed DNA polymerase</keyword>
<keyword id="KW-0244">Early protein</keyword>
<keyword id="KW-0378">Hydrolase</keyword>
<keyword id="KW-0511">Multifunctional enzyme</keyword>
<keyword id="KW-0548">Nucleotidyltransferase</keyword>
<keyword id="KW-1185">Reference proteome</keyword>
<keyword id="KW-0808">Transferase</keyword>
<keyword id="KW-1194">Viral DNA replication</keyword>